<name>VP2_BTV1V</name>
<keyword id="KW-0167">Capsid protein</keyword>
<keyword id="KW-1165">Clathrin-mediated endocytosis of virus by host</keyword>
<keyword id="KW-0945">Host-virus interaction</keyword>
<keyword id="KW-1153">Inner capsid protein</keyword>
<keyword id="KW-1161">Viral attachment to host cell</keyword>
<keyword id="KW-1162">Viral penetration into host cytoplasm</keyword>
<keyword id="KW-0946">Virion</keyword>
<keyword id="KW-1164">Virus endocytosis by host</keyword>
<keyword id="KW-1160">Virus entry into host cell</keyword>
<gene>
    <name type="primary">Segment-2</name>
</gene>
<sequence>MDELGIPVYKRGFPEHLLRGYEFTIDVGTKIESVGGRHDVTKIPEMNAYDIKQESIRTALWYNPIRNDGIVLPRVLDITLRGYDERRAVVESTRHKSFHTNDQWVQWMMKDSMDAQPLKVGLDDQSRNVAHSLHNCVVKIDSKKADTMSYHVEPIEDASKGCLHTRTMMWNHLVRIETFHTAQEVHILFKPTYDIVVHAERRDRSQPFRPGDQTLINFGRGQKVHMNHNSYDKMVEGLTHLVMRGKMPEVIRDDIASLDEICNRWIQSRHDPGEVKAYELCKILSTIGRKVLDREKEPEDEANLSIRFQEAIDNKFRQHDPERLKIFEHGNQRRDEDRFYILLMIAASDTFNTRVWWSNPYPCLRGTLIASETKLGDVYSMMRSWYDWSVRPTYTPYEKTREQEEYIYGRVNLFDFVAEPGIKIVHWEYRLNHSTREITYAQGNPCDLYPEDDDVIVTKFDDVAYGQMINEMINGGWNQEQFKMHKILKTEGNVLTIDFEKDAKLTTNEGVTMPEYFNKWIIAPMFNANVRIKHEEIAQRQSDDPMVKRTLSPITADPIELQRLTLARFYDIRPALRGQALSRQQAQSTYDEEISKKAGYAEVLKRRGIVQIPKKPCPTVTAQYTLERYALFIINYLQQHVARDCDEEAIYEHPKADHELEIFGESIVDISQVIVLVFDLIFERRRRVRDVYESRYIIARIREMRGKEKLNVIAEFFPTYGSLLNGLSGATVVQDIMYLNFLPLYFLVGDNMIYSHRQWSIPLLLYTHEVMVIPLEVGSYNDRCGLIAYLEYMVFFPSKAIRLSKLNEAHAKIAREMLKYYANTTVYDGGDNSNVVTTKQLLYETYLASLCGGFLDGIVWYLPITHPNKCIVAIEVSDERVPASVRAGRIRLRFPLSARHLKGVVIIQVDLGGRFTVYSEGIVSHRVCKKNLLKYMCDIILLKFSGHVFGNDEMLTKLLNV</sequence>
<feature type="chain" id="PRO_0000222682" description="Outer capsid protein VP2">
    <location>
        <begin position="1"/>
        <end position="961"/>
    </location>
</feature>
<accession>Q06997</accession>
<proteinExistence type="inferred from homology"/>
<organism>
    <name type="scientific">Bluetongue virus 1 (isolate South Africa vaccine)</name>
    <name type="common">BTV 1</name>
    <dbReference type="NCBI Taxonomy" id="36422"/>
    <lineage>
        <taxon>Viruses</taxon>
        <taxon>Riboviria</taxon>
        <taxon>Orthornavirae</taxon>
        <taxon>Duplornaviricota</taxon>
        <taxon>Resentoviricetes</taxon>
        <taxon>Reovirales</taxon>
        <taxon>Sedoreoviridae</taxon>
        <taxon>Orbivirus</taxon>
        <taxon>Bluetongue virus</taxon>
    </lineage>
</organism>
<dbReference type="EMBL" id="X55800">
    <property type="protein sequence ID" value="CAA39322.1"/>
    <property type="molecule type" value="Genomic_RNA"/>
</dbReference>
<dbReference type="PIR" id="A60017">
    <property type="entry name" value="A60017"/>
</dbReference>
<dbReference type="SMR" id="Q06997"/>
<dbReference type="GO" id="GO:0039625">
    <property type="term" value="C:viral inner capsid"/>
    <property type="evidence" value="ECO:0007669"/>
    <property type="project" value="UniProtKB-KW"/>
</dbReference>
<dbReference type="GO" id="GO:0005198">
    <property type="term" value="F:structural molecule activity"/>
    <property type="evidence" value="ECO:0007669"/>
    <property type="project" value="InterPro"/>
</dbReference>
<dbReference type="GO" id="GO:0075512">
    <property type="term" value="P:clathrin-dependent endocytosis of virus by host cell"/>
    <property type="evidence" value="ECO:0007669"/>
    <property type="project" value="UniProtKB-KW"/>
</dbReference>
<dbReference type="GO" id="GO:0019062">
    <property type="term" value="P:virion attachment to host cell"/>
    <property type="evidence" value="ECO:0007669"/>
    <property type="project" value="UniProtKB-KW"/>
</dbReference>
<dbReference type="InterPro" id="IPR001742">
    <property type="entry name" value="Capsid_VP2_Orbivir"/>
</dbReference>
<dbReference type="Pfam" id="PF00898">
    <property type="entry name" value="Orbi_VP2"/>
    <property type="match status" value="1"/>
</dbReference>
<reference key="1">
    <citation type="journal article" date="1990" name="Virus Res.">
        <title>Relationships amongst bluetongue viruses revealed by comparisons of capsid and outer coat protein nucleotide sequences.</title>
        <authorList>
            <person name="Gould A.R."/>
            <person name="Pritchard L.I."/>
        </authorList>
    </citation>
    <scope>NUCLEOTIDE SEQUENCE [GENOMIC RNA]</scope>
</reference>
<organismHost>
    <name type="scientific">Antilocapra americana</name>
    <name type="common">Pronghorn</name>
    <dbReference type="NCBI Taxonomy" id="9891"/>
</organismHost>
<organismHost>
    <name type="scientific">Bos taurus</name>
    <name type="common">Bovine</name>
    <dbReference type="NCBI Taxonomy" id="9913"/>
</organismHost>
<organismHost>
    <name type="scientific">Capra hircus</name>
    <name type="common">Goat</name>
    <dbReference type="NCBI Taxonomy" id="9925"/>
</organismHost>
<organismHost>
    <name type="scientific">Culicoides variipennis</name>
    <name type="common">Biting midge</name>
    <dbReference type="NCBI Taxonomy" id="46212"/>
</organismHost>
<organismHost>
    <name type="scientific">Ovis aries</name>
    <name type="common">Sheep</name>
    <dbReference type="NCBI Taxonomy" id="9940"/>
</organismHost>
<evidence type="ECO:0000250" key="1"/>
<evidence type="ECO:0000305" key="2"/>
<protein>
    <recommendedName>
        <fullName>Outer capsid protein VP2</fullName>
    </recommendedName>
</protein>
<comment type="function">
    <text evidence="1">The VP2 protein is one of the two proteins (with VP5) which constitute the virus particle outer capsid. It is the major target of the host immunogenic response. Responsible for viral attachment to target host cell, probably by binding to sialic acid. This attachment induces virion internalization predominantly through clathrin-dependent endocytosis (By similarity).</text>
</comment>
<comment type="subcellular location">
    <subcellularLocation>
        <location evidence="2">Virion</location>
    </subcellularLocation>
</comment>
<comment type="similarity">
    <text evidence="2">Belongs to the orbivirus VP2 family.</text>
</comment>